<comment type="function">
    <text evidence="1">Produces ATP from ADP in the presence of a proton gradient across the membrane. The gamma chain is believed to be important in regulating ATPase activity and the flow of protons through the CF(0) complex.</text>
</comment>
<comment type="subunit">
    <text evidence="1">F-type ATPases have 2 components, CF(1) - the catalytic core - and CF(0) - the membrane proton channel. CF(1) has five subunits: alpha(3), beta(3), gamma(1), delta(1), epsilon(1). CF(0) has three main subunits: a, b and c.</text>
</comment>
<comment type="subcellular location">
    <subcellularLocation>
        <location evidence="1">Cell membrane</location>
        <topology evidence="1">Peripheral membrane protein</topology>
    </subcellularLocation>
</comment>
<comment type="similarity">
    <text evidence="1">Belongs to the ATPase gamma chain family.</text>
</comment>
<sequence length="286" mass="32516">MASLNEIKKRIKIIESTSKITNAMKLVSSAKLKKQKELFLNESIYYKKFYDLFTYIKSNSDSEILSLKKSEEGKTIWLAFFSSMGLCGSFNLNIVKELQKHIKSNDEIWLIGKKGKNLIKSKGIEAEISLDLELDDKDINFDLFHIIAENLLAKYKNDYNIKSIKVIYSKFVNSLSFTPSVFSLLPLDKAIEKPRLDKPNNGADFSIQPNANDVFESILIDYLATCIHGAIVESKVCENASRRNAMDSATKNANELIKNYKLEFNRKRQSEITQEITEIVSGAKGE</sequence>
<evidence type="ECO:0000255" key="1">
    <source>
        <dbReference type="HAMAP-Rule" id="MF_00815"/>
    </source>
</evidence>
<gene>
    <name evidence="1" type="primary">atpG</name>
    <name type="ordered locus">MYPE610</name>
</gene>
<dbReference type="EMBL" id="BA000026">
    <property type="protein sequence ID" value="BAC43851.1"/>
    <property type="molecule type" value="Genomic_DNA"/>
</dbReference>
<dbReference type="RefSeq" id="WP_011076887.1">
    <property type="nucleotide sequence ID" value="NC_004432.1"/>
</dbReference>
<dbReference type="SMR" id="Q8EWY9"/>
<dbReference type="FunCoup" id="Q8EWY9">
    <property type="interactions" value="240"/>
</dbReference>
<dbReference type="STRING" id="272633.gene:10731152"/>
<dbReference type="KEGG" id="mpe:MYPE610"/>
<dbReference type="eggNOG" id="COG0224">
    <property type="taxonomic scope" value="Bacteria"/>
</dbReference>
<dbReference type="HOGENOM" id="CLU_050669_4_1_14"/>
<dbReference type="InParanoid" id="Q8EWY9"/>
<dbReference type="Proteomes" id="UP000002522">
    <property type="component" value="Chromosome"/>
</dbReference>
<dbReference type="GO" id="GO:0005886">
    <property type="term" value="C:plasma membrane"/>
    <property type="evidence" value="ECO:0007669"/>
    <property type="project" value="UniProtKB-SubCell"/>
</dbReference>
<dbReference type="GO" id="GO:0045259">
    <property type="term" value="C:proton-transporting ATP synthase complex"/>
    <property type="evidence" value="ECO:0007669"/>
    <property type="project" value="UniProtKB-KW"/>
</dbReference>
<dbReference type="GO" id="GO:0005524">
    <property type="term" value="F:ATP binding"/>
    <property type="evidence" value="ECO:0007669"/>
    <property type="project" value="UniProtKB-UniRule"/>
</dbReference>
<dbReference type="GO" id="GO:0046933">
    <property type="term" value="F:proton-transporting ATP synthase activity, rotational mechanism"/>
    <property type="evidence" value="ECO:0007669"/>
    <property type="project" value="UniProtKB-UniRule"/>
</dbReference>
<dbReference type="GO" id="GO:0042777">
    <property type="term" value="P:proton motive force-driven plasma membrane ATP synthesis"/>
    <property type="evidence" value="ECO:0007669"/>
    <property type="project" value="UniProtKB-UniRule"/>
</dbReference>
<dbReference type="CDD" id="cd12151">
    <property type="entry name" value="F1-ATPase_gamma"/>
    <property type="match status" value="1"/>
</dbReference>
<dbReference type="Gene3D" id="3.40.1380.10">
    <property type="match status" value="1"/>
</dbReference>
<dbReference type="Gene3D" id="1.10.287.80">
    <property type="entry name" value="ATP synthase, gamma subunit, helix hairpin domain"/>
    <property type="match status" value="1"/>
</dbReference>
<dbReference type="HAMAP" id="MF_00815">
    <property type="entry name" value="ATP_synth_gamma_bact"/>
    <property type="match status" value="1"/>
</dbReference>
<dbReference type="InterPro" id="IPR035968">
    <property type="entry name" value="ATP_synth_F1_ATPase_gsu"/>
</dbReference>
<dbReference type="InterPro" id="IPR000131">
    <property type="entry name" value="ATP_synth_F1_gsu"/>
</dbReference>
<dbReference type="NCBIfam" id="TIGR01146">
    <property type="entry name" value="ATPsyn_F1gamma"/>
    <property type="match status" value="1"/>
</dbReference>
<dbReference type="PANTHER" id="PTHR11693">
    <property type="entry name" value="ATP SYNTHASE GAMMA CHAIN"/>
    <property type="match status" value="1"/>
</dbReference>
<dbReference type="PANTHER" id="PTHR11693:SF22">
    <property type="entry name" value="ATP SYNTHASE SUBUNIT GAMMA, MITOCHONDRIAL"/>
    <property type="match status" value="1"/>
</dbReference>
<dbReference type="Pfam" id="PF00231">
    <property type="entry name" value="ATP-synt"/>
    <property type="match status" value="1"/>
</dbReference>
<dbReference type="PRINTS" id="PR00126">
    <property type="entry name" value="ATPASEGAMMA"/>
</dbReference>
<dbReference type="SUPFAM" id="SSF52943">
    <property type="entry name" value="ATP synthase (F1-ATPase), gamma subunit"/>
    <property type="match status" value="1"/>
</dbReference>
<feature type="chain" id="PRO_0000073323" description="ATP synthase gamma chain">
    <location>
        <begin position="1"/>
        <end position="286"/>
    </location>
</feature>
<proteinExistence type="inferred from homology"/>
<accession>Q8EWY9</accession>
<name>ATPG_MALP2</name>
<organism>
    <name type="scientific">Malacoplasma penetrans (strain HF-2)</name>
    <name type="common">Mycoplasma penetrans</name>
    <dbReference type="NCBI Taxonomy" id="272633"/>
    <lineage>
        <taxon>Bacteria</taxon>
        <taxon>Bacillati</taxon>
        <taxon>Mycoplasmatota</taxon>
        <taxon>Mycoplasmoidales</taxon>
        <taxon>Mycoplasmoidaceae</taxon>
        <taxon>Malacoplasma</taxon>
    </lineage>
</organism>
<protein>
    <recommendedName>
        <fullName evidence="1">ATP synthase gamma chain</fullName>
    </recommendedName>
    <alternativeName>
        <fullName evidence="1">ATP synthase F1 sector gamma subunit</fullName>
    </alternativeName>
    <alternativeName>
        <fullName evidence="1">F-ATPase gamma subunit</fullName>
    </alternativeName>
</protein>
<keyword id="KW-0066">ATP synthesis</keyword>
<keyword id="KW-1003">Cell membrane</keyword>
<keyword id="KW-0139">CF(1)</keyword>
<keyword id="KW-0375">Hydrogen ion transport</keyword>
<keyword id="KW-0406">Ion transport</keyword>
<keyword id="KW-0472">Membrane</keyword>
<keyword id="KW-1185">Reference proteome</keyword>
<keyword id="KW-0813">Transport</keyword>
<reference key="1">
    <citation type="journal article" date="2002" name="Nucleic Acids Res.">
        <title>The complete genomic sequence of Mycoplasma penetrans, an intracellular bacterial pathogen in humans.</title>
        <authorList>
            <person name="Sasaki Y."/>
            <person name="Ishikawa J."/>
            <person name="Yamashita A."/>
            <person name="Oshima K."/>
            <person name="Kenri T."/>
            <person name="Furuya K."/>
            <person name="Yoshino C."/>
            <person name="Horino A."/>
            <person name="Shiba T."/>
            <person name="Sasaki T."/>
            <person name="Hattori M."/>
        </authorList>
    </citation>
    <scope>NUCLEOTIDE SEQUENCE [LARGE SCALE GENOMIC DNA]</scope>
    <source>
        <strain>HF-2</strain>
    </source>
</reference>